<protein>
    <recommendedName>
        <fullName evidence="1">UPF0253 protein YpsIP31758_1034</fullName>
    </recommendedName>
</protein>
<accession>A7FFJ0</accession>
<sequence length="66" mass="7228">MQQYCELVRRFYAEIGSGDLGYVPDALRCVLKALDEVAANDALPSSVREQAAYAAANLLVSDYVDE</sequence>
<feature type="chain" id="PRO_1000064507" description="UPF0253 protein YpsIP31758_1034">
    <location>
        <begin position="1"/>
        <end position="66"/>
    </location>
</feature>
<reference key="1">
    <citation type="journal article" date="2007" name="PLoS Genet.">
        <title>The complete genome sequence of Yersinia pseudotuberculosis IP31758, the causative agent of Far East scarlet-like fever.</title>
        <authorList>
            <person name="Eppinger M."/>
            <person name="Rosovitz M.J."/>
            <person name="Fricke W.F."/>
            <person name="Rasko D.A."/>
            <person name="Kokorina G."/>
            <person name="Fayolle C."/>
            <person name="Lindler L.E."/>
            <person name="Carniel E."/>
            <person name="Ravel J."/>
        </authorList>
    </citation>
    <scope>NUCLEOTIDE SEQUENCE [LARGE SCALE GENOMIC DNA]</scope>
    <source>
        <strain>IP 31758</strain>
    </source>
</reference>
<gene>
    <name type="ordered locus">YpsIP31758_1034</name>
</gene>
<comment type="similarity">
    <text evidence="1">Belongs to the UPF0253 family.</text>
</comment>
<proteinExistence type="inferred from homology"/>
<evidence type="ECO:0000255" key="1">
    <source>
        <dbReference type="HAMAP-Rule" id="MF_01064"/>
    </source>
</evidence>
<dbReference type="EMBL" id="CP000720">
    <property type="protein sequence ID" value="ABS48560.1"/>
    <property type="molecule type" value="Genomic_DNA"/>
</dbReference>
<dbReference type="RefSeq" id="WP_002212152.1">
    <property type="nucleotide sequence ID" value="NC_009708.1"/>
</dbReference>
<dbReference type="SMR" id="A7FFJ0"/>
<dbReference type="KEGG" id="ypi:YpsIP31758_1034"/>
<dbReference type="HOGENOM" id="CLU_190008_0_0_6"/>
<dbReference type="Proteomes" id="UP000002412">
    <property type="component" value="Chromosome"/>
</dbReference>
<dbReference type="HAMAP" id="MF_01064">
    <property type="entry name" value="UPF0253"/>
    <property type="match status" value="1"/>
</dbReference>
<dbReference type="InterPro" id="IPR009624">
    <property type="entry name" value="UPF0253"/>
</dbReference>
<dbReference type="NCBIfam" id="NF003436">
    <property type="entry name" value="PRK04964.1"/>
    <property type="match status" value="1"/>
</dbReference>
<dbReference type="Pfam" id="PF06786">
    <property type="entry name" value="UPF0253"/>
    <property type="match status" value="1"/>
</dbReference>
<organism>
    <name type="scientific">Yersinia pseudotuberculosis serotype O:1b (strain IP 31758)</name>
    <dbReference type="NCBI Taxonomy" id="349747"/>
    <lineage>
        <taxon>Bacteria</taxon>
        <taxon>Pseudomonadati</taxon>
        <taxon>Pseudomonadota</taxon>
        <taxon>Gammaproteobacteria</taxon>
        <taxon>Enterobacterales</taxon>
        <taxon>Yersiniaceae</taxon>
        <taxon>Yersinia</taxon>
    </lineage>
</organism>
<name>Y1034_YERP3</name>